<accession>Q2NIA4</accession>
<proteinExistence type="inferred from homology"/>
<protein>
    <recommendedName>
        <fullName evidence="1">Probable bifunctional tRNA threonylcarbamoyladenosine biosynthesis protein</fullName>
    </recommendedName>
    <domain>
        <recommendedName>
            <fullName evidence="1">tRNA N6-adenosine threonylcarbamoyltransferase</fullName>
            <ecNumber evidence="1">2.3.1.234</ecNumber>
        </recommendedName>
        <alternativeName>
            <fullName>N6-L-threonylcarbamoyladenine synthase</fullName>
            <shortName>t(6)A synthase</shortName>
        </alternativeName>
        <alternativeName>
            <fullName evidence="1">t(6)A37 threonylcarbamoyladenosine biosynthesis protein Kae1</fullName>
        </alternativeName>
        <alternativeName>
            <fullName evidence="1">tRNA threonylcarbamoyladenosine biosynthesis protein Kae1</fullName>
        </alternativeName>
    </domain>
    <domain>
        <recommendedName>
            <fullName evidence="1">Serine/threonine-protein kinase Bud32</fullName>
            <ecNumber evidence="1">2.7.11.1</ecNumber>
        </recommendedName>
    </domain>
</protein>
<comment type="function">
    <text evidence="1">Required for the formation of a threonylcarbamoyl group on adenosine at position 37 (t(6)A37) in tRNAs that read codons beginning with adenine. Is a component of the KEOPS complex that is probably involved in the transfer of the threonylcarbamoyl moiety of threonylcarbamoyl-AMP (TC-AMP) to the N6 group of A37. The Kae1 domain likely plays a direct catalytic role in this reaction. The Bud32 domain probably displays kinase activity that regulates Kae1 function.</text>
</comment>
<comment type="catalytic activity">
    <reaction evidence="1">
        <text>L-seryl-[protein] + ATP = O-phospho-L-seryl-[protein] + ADP + H(+)</text>
        <dbReference type="Rhea" id="RHEA:17989"/>
        <dbReference type="Rhea" id="RHEA-COMP:9863"/>
        <dbReference type="Rhea" id="RHEA-COMP:11604"/>
        <dbReference type="ChEBI" id="CHEBI:15378"/>
        <dbReference type="ChEBI" id="CHEBI:29999"/>
        <dbReference type="ChEBI" id="CHEBI:30616"/>
        <dbReference type="ChEBI" id="CHEBI:83421"/>
        <dbReference type="ChEBI" id="CHEBI:456216"/>
        <dbReference type="EC" id="2.7.11.1"/>
    </reaction>
</comment>
<comment type="catalytic activity">
    <reaction evidence="1">
        <text>L-threonyl-[protein] + ATP = O-phospho-L-threonyl-[protein] + ADP + H(+)</text>
        <dbReference type="Rhea" id="RHEA:46608"/>
        <dbReference type="Rhea" id="RHEA-COMP:11060"/>
        <dbReference type="Rhea" id="RHEA-COMP:11605"/>
        <dbReference type="ChEBI" id="CHEBI:15378"/>
        <dbReference type="ChEBI" id="CHEBI:30013"/>
        <dbReference type="ChEBI" id="CHEBI:30616"/>
        <dbReference type="ChEBI" id="CHEBI:61977"/>
        <dbReference type="ChEBI" id="CHEBI:456216"/>
        <dbReference type="EC" id="2.7.11.1"/>
    </reaction>
</comment>
<comment type="catalytic activity">
    <reaction evidence="1">
        <text>L-threonylcarbamoyladenylate + adenosine(37) in tRNA = N(6)-L-threonylcarbamoyladenosine(37) in tRNA + AMP + H(+)</text>
        <dbReference type="Rhea" id="RHEA:37059"/>
        <dbReference type="Rhea" id="RHEA-COMP:10162"/>
        <dbReference type="Rhea" id="RHEA-COMP:10163"/>
        <dbReference type="ChEBI" id="CHEBI:15378"/>
        <dbReference type="ChEBI" id="CHEBI:73682"/>
        <dbReference type="ChEBI" id="CHEBI:74411"/>
        <dbReference type="ChEBI" id="CHEBI:74418"/>
        <dbReference type="ChEBI" id="CHEBI:456215"/>
        <dbReference type="EC" id="2.3.1.234"/>
    </reaction>
</comment>
<comment type="cofactor">
    <cofactor evidence="1">
        <name>Fe(2+)</name>
        <dbReference type="ChEBI" id="CHEBI:29033"/>
    </cofactor>
    <text evidence="1">Binds 1 Fe(2+) ion per subunit.</text>
</comment>
<comment type="subunit">
    <text evidence="1">Component of the KEOPS complex that consists of Kae1, Bud32, Cgi121 and Pcc1; the whole complex dimerizes.</text>
</comment>
<comment type="subcellular location">
    <subcellularLocation>
        <location evidence="1">Cytoplasm</location>
    </subcellularLocation>
</comment>
<comment type="similarity">
    <text evidence="1">In the N-terminal section; belongs to the KAE1 / TsaD family.</text>
</comment>
<comment type="similarity">
    <text evidence="1">In the C-terminal section; belongs to the protein kinase superfamily. Tyr protein kinase family. BUD32 subfamily.</text>
</comment>
<organism>
    <name type="scientific">Methanosphaera stadtmanae (strain ATCC 43021 / DSM 3091 / JCM 11832 / MCB-3)</name>
    <dbReference type="NCBI Taxonomy" id="339860"/>
    <lineage>
        <taxon>Archaea</taxon>
        <taxon>Methanobacteriati</taxon>
        <taxon>Methanobacteriota</taxon>
        <taxon>Methanomada group</taxon>
        <taxon>Methanobacteria</taxon>
        <taxon>Methanobacteriales</taxon>
        <taxon>Methanobacteriaceae</taxon>
        <taxon>Methanosphaera</taxon>
    </lineage>
</organism>
<evidence type="ECO:0000255" key="1">
    <source>
        <dbReference type="HAMAP-Rule" id="MF_01447"/>
    </source>
</evidence>
<keyword id="KW-0012">Acyltransferase</keyword>
<keyword id="KW-0067">ATP-binding</keyword>
<keyword id="KW-0963">Cytoplasm</keyword>
<keyword id="KW-0408">Iron</keyword>
<keyword id="KW-0418">Kinase</keyword>
<keyword id="KW-0479">Metal-binding</keyword>
<keyword id="KW-0511">Multifunctional enzyme</keyword>
<keyword id="KW-0547">Nucleotide-binding</keyword>
<keyword id="KW-1185">Reference proteome</keyword>
<keyword id="KW-0723">Serine/threonine-protein kinase</keyword>
<keyword id="KW-0808">Transferase</keyword>
<keyword id="KW-0819">tRNA processing</keyword>
<name>KAE1B_METST</name>
<gene>
    <name type="ordered locus">Msp_0013</name>
</gene>
<feature type="chain" id="PRO_0000303657" description="Probable bifunctional tRNA threonylcarbamoyladenosine biosynthesis protein">
    <location>
        <begin position="1"/>
        <end position="534"/>
    </location>
</feature>
<feature type="domain" description="Protein kinase" evidence="1">
    <location>
        <begin position="335"/>
        <end position="534"/>
    </location>
</feature>
<feature type="region of interest" description="Kae1">
    <location>
        <begin position="1"/>
        <end position="324"/>
    </location>
</feature>
<feature type="active site" description="Proton acceptor; for kinase activity" evidence="1">
    <location>
        <position position="455"/>
    </location>
</feature>
<feature type="binding site" evidence="1">
    <location>
        <position position="108"/>
    </location>
    <ligand>
        <name>Fe cation</name>
        <dbReference type="ChEBI" id="CHEBI:24875"/>
    </ligand>
</feature>
<feature type="binding site" evidence="1">
    <location>
        <position position="112"/>
    </location>
    <ligand>
        <name>Fe cation</name>
        <dbReference type="ChEBI" id="CHEBI:24875"/>
    </ligand>
</feature>
<feature type="binding site" evidence="1">
    <location>
        <begin position="129"/>
        <end position="133"/>
    </location>
    <ligand>
        <name>L-threonylcarbamoyladenylate</name>
        <dbReference type="ChEBI" id="CHEBI:73682"/>
    </ligand>
</feature>
<feature type="binding site" evidence="1">
    <location>
        <position position="129"/>
    </location>
    <ligand>
        <name>Fe cation</name>
        <dbReference type="ChEBI" id="CHEBI:24875"/>
    </ligand>
</feature>
<feature type="binding site" evidence="1">
    <location>
        <position position="161"/>
    </location>
    <ligand>
        <name>L-threonylcarbamoyladenylate</name>
        <dbReference type="ChEBI" id="CHEBI:73682"/>
    </ligand>
</feature>
<feature type="binding site" evidence="1">
    <location>
        <position position="174"/>
    </location>
    <ligand>
        <name>L-threonylcarbamoyladenylate</name>
        <dbReference type="ChEBI" id="CHEBI:73682"/>
    </ligand>
</feature>
<feature type="binding site" evidence="1">
    <location>
        <position position="178"/>
    </location>
    <ligand>
        <name>L-threonylcarbamoyladenylate</name>
        <dbReference type="ChEBI" id="CHEBI:73682"/>
    </ligand>
</feature>
<feature type="binding site" evidence="1">
    <location>
        <position position="258"/>
    </location>
    <ligand>
        <name>L-threonylcarbamoyladenylate</name>
        <dbReference type="ChEBI" id="CHEBI:73682"/>
    </ligand>
</feature>
<feature type="binding site" evidence="1">
    <location>
        <position position="286"/>
    </location>
    <ligand>
        <name>Fe cation</name>
        <dbReference type="ChEBI" id="CHEBI:24875"/>
    </ligand>
</feature>
<feature type="binding site" evidence="1">
    <location>
        <begin position="340"/>
        <end position="348"/>
    </location>
    <ligand>
        <name>ATP</name>
        <dbReference type="ChEBI" id="CHEBI:30616"/>
    </ligand>
</feature>
<feature type="binding site" evidence="1">
    <location>
        <position position="361"/>
    </location>
    <ligand>
        <name>ATP</name>
        <dbReference type="ChEBI" id="CHEBI:30616"/>
    </ligand>
</feature>
<sequence>MICLGIEGTAEKCGIGIVDSDGNILATCGCQLYPEVGGIHPREAANFHAEHIVPLIREALEESNLSINDIDLVSFAKGPGLGPALRTVATAARSLSQNIGVPLIGVNHCIGHVEIGKLTTGAKDPLTLYTSGGNTQIISYESGRYRIIGETLDIAIGNCLDQFSRDIGLGHPGGPIVEKHAENTNKTIELPYVVKGMDLSFSGILTSAINKYKQGVDLDVICNSFQQTCFAMLCEVTERAISYTGKNEVLLCGGVAANSKLRQMLQVMCEDHYVDFYMPPMKYCGDNGSMIARVGLLSYDENKCGIENSYINPKYRTDQVEVTWIKDNFQHNINLPDNIKEKGAEADIIEGIWDEREVIIKHRVKKKYRVDKLDEKLRLERTKEEAKLLSDCKKYGVTTPYIYSIDLNRKDIILEKIDAPKLHEIINTDKDIKKIFTNIGEMVFKMHEGEIIHGDLTTANILIKDDKPIFIDFGLGKYSNLLEDKGTDLLVFKKSLNTIIPEKSEELFNYFLNGYDNEDVIKKIDEIEKRGRYL</sequence>
<reference key="1">
    <citation type="journal article" date="2006" name="J. Bacteriol.">
        <title>The genome sequence of Methanosphaera stadtmanae reveals why this human intestinal archaeon is restricted to methanol and H2 for methane formation and ATP synthesis.</title>
        <authorList>
            <person name="Fricke W.F."/>
            <person name="Seedorf H."/>
            <person name="Henne A."/>
            <person name="Kruer M."/>
            <person name="Liesegang H."/>
            <person name="Hedderich R."/>
            <person name="Gottschalk G."/>
            <person name="Thauer R.K."/>
        </authorList>
    </citation>
    <scope>NUCLEOTIDE SEQUENCE [LARGE SCALE GENOMIC DNA]</scope>
    <source>
        <strain>ATCC 43021 / DSM 3091 / JCM 11832 / MCB-3</strain>
    </source>
</reference>
<dbReference type="EC" id="2.3.1.234" evidence="1"/>
<dbReference type="EC" id="2.7.11.1" evidence="1"/>
<dbReference type="EMBL" id="CP000102">
    <property type="protein sequence ID" value="ABC56433.1"/>
    <property type="molecule type" value="Genomic_DNA"/>
</dbReference>
<dbReference type="RefSeq" id="WP_011405632.1">
    <property type="nucleotide sequence ID" value="NC_007681.1"/>
</dbReference>
<dbReference type="SMR" id="Q2NIA4"/>
<dbReference type="STRING" id="339860.Msp_0013"/>
<dbReference type="KEGG" id="mst:Msp_0013"/>
<dbReference type="eggNOG" id="arCOG01183">
    <property type="taxonomic scope" value="Archaea"/>
</dbReference>
<dbReference type="eggNOG" id="arCOG01185">
    <property type="taxonomic scope" value="Archaea"/>
</dbReference>
<dbReference type="HOGENOM" id="CLU_023208_2_2_2"/>
<dbReference type="OrthoDB" id="6818at2157"/>
<dbReference type="Proteomes" id="UP000001931">
    <property type="component" value="Chromosome"/>
</dbReference>
<dbReference type="GO" id="GO:0005737">
    <property type="term" value="C:cytoplasm"/>
    <property type="evidence" value="ECO:0007669"/>
    <property type="project" value="UniProtKB-SubCell"/>
</dbReference>
<dbReference type="GO" id="GO:0000408">
    <property type="term" value="C:EKC/KEOPS complex"/>
    <property type="evidence" value="ECO:0007669"/>
    <property type="project" value="InterPro"/>
</dbReference>
<dbReference type="GO" id="GO:0005524">
    <property type="term" value="F:ATP binding"/>
    <property type="evidence" value="ECO:0007669"/>
    <property type="project" value="UniProtKB-UniRule"/>
</dbReference>
<dbReference type="GO" id="GO:0005506">
    <property type="term" value="F:iron ion binding"/>
    <property type="evidence" value="ECO:0007669"/>
    <property type="project" value="UniProtKB-UniRule"/>
</dbReference>
<dbReference type="GO" id="GO:0004222">
    <property type="term" value="F:metalloendopeptidase activity"/>
    <property type="evidence" value="ECO:0007669"/>
    <property type="project" value="InterPro"/>
</dbReference>
<dbReference type="GO" id="GO:0061711">
    <property type="term" value="F:N(6)-L-threonylcarbamoyladenine synthase activity"/>
    <property type="evidence" value="ECO:0007669"/>
    <property type="project" value="UniProtKB-EC"/>
</dbReference>
<dbReference type="GO" id="GO:0106310">
    <property type="term" value="F:protein serine kinase activity"/>
    <property type="evidence" value="ECO:0007669"/>
    <property type="project" value="RHEA"/>
</dbReference>
<dbReference type="GO" id="GO:0004674">
    <property type="term" value="F:protein serine/threonine kinase activity"/>
    <property type="evidence" value="ECO:0007669"/>
    <property type="project" value="UniProtKB-KW"/>
</dbReference>
<dbReference type="GO" id="GO:0004712">
    <property type="term" value="F:protein serine/threonine/tyrosine kinase activity"/>
    <property type="evidence" value="ECO:0007669"/>
    <property type="project" value="UniProtKB-UniRule"/>
</dbReference>
<dbReference type="GO" id="GO:0008270">
    <property type="term" value="F:zinc ion binding"/>
    <property type="evidence" value="ECO:0007669"/>
    <property type="project" value="InterPro"/>
</dbReference>
<dbReference type="GO" id="GO:0002949">
    <property type="term" value="P:tRNA threonylcarbamoyladenosine modification"/>
    <property type="evidence" value="ECO:0007669"/>
    <property type="project" value="UniProtKB-UniRule"/>
</dbReference>
<dbReference type="CDD" id="cd24131">
    <property type="entry name" value="ASKHA_NBD_Kae1_arch_bac"/>
    <property type="match status" value="1"/>
</dbReference>
<dbReference type="FunFam" id="3.30.420.40:FF:000038">
    <property type="entry name" value="Probable tRNA N6-adenosine threonylcarbamoyltransferase"/>
    <property type="match status" value="1"/>
</dbReference>
<dbReference type="FunFam" id="3.30.200.20:FF:000201">
    <property type="entry name" value="TP53-regulating kinase isoform X1"/>
    <property type="match status" value="1"/>
</dbReference>
<dbReference type="Gene3D" id="3.30.420.40">
    <property type="match status" value="2"/>
</dbReference>
<dbReference type="Gene3D" id="3.30.200.20">
    <property type="entry name" value="Phosphorylase Kinase, domain 1"/>
    <property type="match status" value="1"/>
</dbReference>
<dbReference type="Gene3D" id="1.10.510.10">
    <property type="entry name" value="Transferase(Phosphotransferase) domain 1"/>
    <property type="match status" value="1"/>
</dbReference>
<dbReference type="HAMAP" id="MF_01446">
    <property type="entry name" value="Kae1"/>
    <property type="match status" value="1"/>
</dbReference>
<dbReference type="HAMAP" id="MF_01447">
    <property type="entry name" value="Kae1_Bud32_arch"/>
    <property type="match status" value="1"/>
</dbReference>
<dbReference type="InterPro" id="IPR043129">
    <property type="entry name" value="ATPase_NBD"/>
</dbReference>
<dbReference type="InterPro" id="IPR022495">
    <property type="entry name" value="Bud32"/>
</dbReference>
<dbReference type="InterPro" id="IPR000905">
    <property type="entry name" value="Gcp-like_dom"/>
</dbReference>
<dbReference type="InterPro" id="IPR017861">
    <property type="entry name" value="KAE1/TsaD"/>
</dbReference>
<dbReference type="InterPro" id="IPR034680">
    <property type="entry name" value="Kae1_archaea_euk"/>
</dbReference>
<dbReference type="InterPro" id="IPR011009">
    <property type="entry name" value="Kinase-like_dom_sf"/>
</dbReference>
<dbReference type="InterPro" id="IPR000719">
    <property type="entry name" value="Prot_kinase_dom"/>
</dbReference>
<dbReference type="InterPro" id="IPR018934">
    <property type="entry name" value="RIO_dom"/>
</dbReference>
<dbReference type="InterPro" id="IPR009220">
    <property type="entry name" value="tRNA_threonyl_synthase/kinase"/>
</dbReference>
<dbReference type="InterPro" id="IPR008266">
    <property type="entry name" value="Tyr_kinase_AS"/>
</dbReference>
<dbReference type="NCBIfam" id="TIGR03724">
    <property type="entry name" value="arch_bud32"/>
    <property type="match status" value="1"/>
</dbReference>
<dbReference type="NCBIfam" id="TIGR03722">
    <property type="entry name" value="arch_KAE1"/>
    <property type="match status" value="1"/>
</dbReference>
<dbReference type="NCBIfam" id="TIGR00329">
    <property type="entry name" value="gcp_kae1"/>
    <property type="match status" value="1"/>
</dbReference>
<dbReference type="NCBIfam" id="NF007174">
    <property type="entry name" value="PRK09605.1"/>
    <property type="match status" value="1"/>
</dbReference>
<dbReference type="PANTHER" id="PTHR11735">
    <property type="entry name" value="TRNA N6-ADENOSINE THREONYLCARBAMOYLTRANSFERASE"/>
    <property type="match status" value="1"/>
</dbReference>
<dbReference type="PANTHER" id="PTHR11735:SF14">
    <property type="entry name" value="TRNA N6-ADENOSINE THREONYLCARBAMOYLTRANSFERASE"/>
    <property type="match status" value="1"/>
</dbReference>
<dbReference type="Pfam" id="PF01163">
    <property type="entry name" value="RIO1"/>
    <property type="match status" value="1"/>
</dbReference>
<dbReference type="Pfam" id="PF00814">
    <property type="entry name" value="TsaD"/>
    <property type="match status" value="1"/>
</dbReference>
<dbReference type="PIRSF" id="PIRSF036401">
    <property type="entry name" value="Gcp_STYKS"/>
    <property type="match status" value="1"/>
</dbReference>
<dbReference type="PRINTS" id="PR00789">
    <property type="entry name" value="OSIALOPTASE"/>
</dbReference>
<dbReference type="SUPFAM" id="SSF53067">
    <property type="entry name" value="Actin-like ATPase domain"/>
    <property type="match status" value="1"/>
</dbReference>
<dbReference type="SUPFAM" id="SSF56112">
    <property type="entry name" value="Protein kinase-like (PK-like)"/>
    <property type="match status" value="1"/>
</dbReference>
<dbReference type="PROSITE" id="PS50011">
    <property type="entry name" value="PROTEIN_KINASE_DOM"/>
    <property type="match status" value="1"/>
</dbReference>
<dbReference type="PROSITE" id="PS00109">
    <property type="entry name" value="PROTEIN_KINASE_TYR"/>
    <property type="match status" value="1"/>
</dbReference>